<accession>Q58DW3</accession>
<protein>
    <recommendedName>
        <fullName evidence="3">Large ribosomal subunit protein eL29</fullName>
    </recommendedName>
    <alternativeName>
        <fullName>60S ribosomal protein L29</fullName>
    </alternativeName>
</protein>
<organism>
    <name type="scientific">Bos taurus</name>
    <name type="common">Bovine</name>
    <dbReference type="NCBI Taxonomy" id="9913"/>
    <lineage>
        <taxon>Eukaryota</taxon>
        <taxon>Metazoa</taxon>
        <taxon>Chordata</taxon>
        <taxon>Craniata</taxon>
        <taxon>Vertebrata</taxon>
        <taxon>Euteleostomi</taxon>
        <taxon>Mammalia</taxon>
        <taxon>Eutheria</taxon>
        <taxon>Laurasiatheria</taxon>
        <taxon>Artiodactyla</taxon>
        <taxon>Ruminantia</taxon>
        <taxon>Pecora</taxon>
        <taxon>Bovidae</taxon>
        <taxon>Bovinae</taxon>
        <taxon>Bos</taxon>
    </lineage>
</organism>
<sequence>MAKSKNHTTHNQSRKWHRNGIKKPRSQRYESLKGVDPKFLRNMRFAKKHNKKGLKKMQANNAKAMSARAEAVKALVKPKEIKPKMPTGGSRKLSRLAYIAHPKLGKRARARIAKGLRLCRPKSQAKASTKAKPPAAAAPAAKGAQAPTKAPE</sequence>
<feature type="chain" id="PRO_0000231013" description="Large ribosomal subunit protein eL29">
    <location>
        <begin position="1"/>
        <end position="152"/>
    </location>
</feature>
<feature type="region of interest" description="Disordered" evidence="2">
    <location>
        <begin position="1"/>
        <end position="32"/>
    </location>
</feature>
<feature type="region of interest" description="Disordered" evidence="2">
    <location>
        <begin position="119"/>
        <end position="152"/>
    </location>
</feature>
<feature type="compositionally biased region" description="Basic residues" evidence="2">
    <location>
        <begin position="1"/>
        <end position="26"/>
    </location>
</feature>
<feature type="compositionally biased region" description="Low complexity" evidence="2">
    <location>
        <begin position="121"/>
        <end position="152"/>
    </location>
</feature>
<feature type="modified residue" description="N6-methyllysine" evidence="1">
    <location>
        <position position="5"/>
    </location>
</feature>
<feature type="modified residue" description="Phosphoserine" evidence="1">
    <location>
        <position position="31"/>
    </location>
</feature>
<feature type="modified residue" description="N6-acetyllysine" evidence="1">
    <location>
        <position position="33"/>
    </location>
</feature>
<proteinExistence type="evidence at transcript level"/>
<keyword id="KW-0007">Acetylation</keyword>
<keyword id="KW-0963">Cytoplasm</keyword>
<keyword id="KW-0488">Methylation</keyword>
<keyword id="KW-0597">Phosphoprotein</keyword>
<keyword id="KW-1185">Reference proteome</keyword>
<keyword id="KW-0677">Repeat</keyword>
<keyword id="KW-0687">Ribonucleoprotein</keyword>
<keyword id="KW-0689">Ribosomal protein</keyword>
<evidence type="ECO:0000250" key="1">
    <source>
        <dbReference type="UniProtKB" id="P47914"/>
    </source>
</evidence>
<evidence type="ECO:0000256" key="2">
    <source>
        <dbReference type="SAM" id="MobiDB-lite"/>
    </source>
</evidence>
<evidence type="ECO:0000305" key="3"/>
<comment type="function">
    <text evidence="1">Component of the large ribosomal subunit. The ribosome is a large ribonucleoprotein complex responsible for the synthesis of proteins in the cell.</text>
</comment>
<comment type="subunit">
    <text evidence="1">Component of the large ribosomal subunit.</text>
</comment>
<comment type="subcellular location">
    <subcellularLocation>
        <location evidence="1">Cytoplasm</location>
    </subcellularLocation>
</comment>
<comment type="similarity">
    <text evidence="3">Belongs to the eukaryotic ribosomal protein eL29 family.</text>
</comment>
<reference key="1">
    <citation type="journal article" date="2005" name="BMC Genomics">
        <title>Characterization of 954 bovine full-CDS cDNA sequences.</title>
        <authorList>
            <person name="Harhay G.P."/>
            <person name="Sonstegard T.S."/>
            <person name="Keele J.W."/>
            <person name="Heaton M.P."/>
            <person name="Clawson M.L."/>
            <person name="Snelling W.M."/>
            <person name="Wiedmann R.T."/>
            <person name="Van Tassell C.P."/>
            <person name="Smith T.P.L."/>
        </authorList>
    </citation>
    <scope>NUCLEOTIDE SEQUENCE [LARGE SCALE MRNA]</scope>
</reference>
<reference key="2">
    <citation type="submission" date="2005-01" db="EMBL/GenBank/DDBJ databases">
        <title>Analysis of sequences obtained from constructed full-length bovine cDNA libraries.</title>
        <authorList>
            <person name="Yu J."/>
            <person name="Meng Y."/>
            <person name="Wang Z."/>
            <person name="Hansen C."/>
            <person name="Li C."/>
            <person name="Moore S.S."/>
        </authorList>
    </citation>
    <scope>NUCLEOTIDE SEQUENCE [LARGE SCALE MRNA]</scope>
    <source>
        <tissue>Lymphoid epithelium</tissue>
    </source>
</reference>
<reference key="3">
    <citation type="submission" date="2005-08" db="EMBL/GenBank/DDBJ databases">
        <authorList>
            <consortium name="NIH - Mammalian Gene Collection (MGC) project"/>
        </authorList>
    </citation>
    <scope>NUCLEOTIDE SEQUENCE [LARGE SCALE MRNA]</scope>
    <source>
        <strain>Crossbred X Angus</strain>
        <tissue>Ileum</tissue>
    </source>
</reference>
<name>RL29_BOVIN</name>
<dbReference type="EMBL" id="BT021484">
    <property type="protein sequence ID" value="AAX46331.1"/>
    <property type="molecule type" value="mRNA"/>
</dbReference>
<dbReference type="EMBL" id="AY911327">
    <property type="protein sequence ID" value="AAW82095.1"/>
    <property type="molecule type" value="mRNA"/>
</dbReference>
<dbReference type="EMBL" id="BC102218">
    <property type="protein sequence ID" value="AAI02219.1"/>
    <property type="molecule type" value="mRNA"/>
</dbReference>
<dbReference type="RefSeq" id="NP_001014862.1">
    <property type="nucleotide sequence ID" value="NM_001014862.2"/>
</dbReference>
<dbReference type="RefSeq" id="XP_005222800.1">
    <property type="nucleotide sequence ID" value="XM_005222743.3"/>
</dbReference>
<dbReference type="SMR" id="Q58DW3"/>
<dbReference type="FunCoup" id="Q58DW3">
    <property type="interactions" value="391"/>
</dbReference>
<dbReference type="STRING" id="9913.ENSBTAP00000024788"/>
<dbReference type="PaxDb" id="9913-ENSBTAP00000024788"/>
<dbReference type="PeptideAtlas" id="Q58DW3"/>
<dbReference type="Ensembl" id="ENSBTAT00000024788.3">
    <property type="protein sequence ID" value="ENSBTAP00000024788.2"/>
    <property type="gene ID" value="ENSBTAG00000018628.3"/>
</dbReference>
<dbReference type="GeneID" id="507270"/>
<dbReference type="KEGG" id="bta:507270"/>
<dbReference type="CTD" id="6159"/>
<dbReference type="VEuPathDB" id="HostDB:ENSBTAG00000018628"/>
<dbReference type="VGNC" id="VGNC:34115">
    <property type="gene designation" value="RPL29"/>
</dbReference>
<dbReference type="eggNOG" id="KOG3504">
    <property type="taxonomic scope" value="Eukaryota"/>
</dbReference>
<dbReference type="GeneTree" id="ENSGT00390000007084"/>
<dbReference type="HOGENOM" id="CLU_139508_0_0_1"/>
<dbReference type="InParanoid" id="Q58DW3"/>
<dbReference type="OMA" id="LISGHHY"/>
<dbReference type="OrthoDB" id="996720at2759"/>
<dbReference type="TreeFam" id="TF313858"/>
<dbReference type="Reactome" id="R-BTA-156827">
    <property type="pathway name" value="L13a-mediated translational silencing of Ceruloplasmin expression"/>
</dbReference>
<dbReference type="Reactome" id="R-BTA-1799339">
    <property type="pathway name" value="SRP-dependent cotranslational protein targeting to membrane"/>
</dbReference>
<dbReference type="Reactome" id="R-BTA-6791226">
    <property type="pathway name" value="Major pathway of rRNA processing in the nucleolus and cytosol"/>
</dbReference>
<dbReference type="Reactome" id="R-BTA-72689">
    <property type="pathway name" value="Formation of a pool of free 40S subunits"/>
</dbReference>
<dbReference type="Reactome" id="R-BTA-72706">
    <property type="pathway name" value="GTP hydrolysis and joining of the 60S ribosomal subunit"/>
</dbReference>
<dbReference type="Reactome" id="R-BTA-975956">
    <property type="pathway name" value="Nonsense Mediated Decay (NMD) independent of the Exon Junction Complex (EJC)"/>
</dbReference>
<dbReference type="Reactome" id="R-BTA-975957">
    <property type="pathway name" value="Nonsense Mediated Decay (NMD) enhanced by the Exon Junction Complex (EJC)"/>
</dbReference>
<dbReference type="Proteomes" id="UP000009136">
    <property type="component" value="Chromosome 22"/>
</dbReference>
<dbReference type="Bgee" id="ENSBTAG00000018628">
    <property type="expression patterns" value="Expressed in isthmus of fallopian tube and 106 other cell types or tissues"/>
</dbReference>
<dbReference type="GO" id="GO:0022625">
    <property type="term" value="C:cytosolic large ribosomal subunit"/>
    <property type="evidence" value="ECO:0000318"/>
    <property type="project" value="GO_Central"/>
</dbReference>
<dbReference type="GO" id="GO:0003735">
    <property type="term" value="F:structural constituent of ribosome"/>
    <property type="evidence" value="ECO:0000318"/>
    <property type="project" value="GO_Central"/>
</dbReference>
<dbReference type="GO" id="GO:0002181">
    <property type="term" value="P:cytoplasmic translation"/>
    <property type="evidence" value="ECO:0000318"/>
    <property type="project" value="GO_Central"/>
</dbReference>
<dbReference type="Gene3D" id="6.10.140.1730">
    <property type="match status" value="1"/>
</dbReference>
<dbReference type="InterPro" id="IPR002673">
    <property type="entry name" value="Ribosomal_eL29"/>
</dbReference>
<dbReference type="PANTHER" id="PTHR12884">
    <property type="entry name" value="60S RIBOSOMAL PROTEIN L29"/>
    <property type="match status" value="1"/>
</dbReference>
<dbReference type="PANTHER" id="PTHR12884:SF18">
    <property type="entry name" value="60S RIBOSOMAL PROTEIN L29"/>
    <property type="match status" value="1"/>
</dbReference>
<dbReference type="Pfam" id="PF01779">
    <property type="entry name" value="Ribosomal_L29e"/>
    <property type="match status" value="1"/>
</dbReference>
<gene>
    <name type="primary">RPL29</name>
</gene>